<name>KDSC_ECO57</name>
<reference key="1">
    <citation type="journal article" date="2001" name="Nature">
        <title>Genome sequence of enterohaemorrhagic Escherichia coli O157:H7.</title>
        <authorList>
            <person name="Perna N.T."/>
            <person name="Plunkett G. III"/>
            <person name="Burland V."/>
            <person name="Mau B."/>
            <person name="Glasner J.D."/>
            <person name="Rose D.J."/>
            <person name="Mayhew G.F."/>
            <person name="Evans P.S."/>
            <person name="Gregor J."/>
            <person name="Kirkpatrick H.A."/>
            <person name="Posfai G."/>
            <person name="Hackett J."/>
            <person name="Klink S."/>
            <person name="Boutin A."/>
            <person name="Shao Y."/>
            <person name="Miller L."/>
            <person name="Grotbeck E.J."/>
            <person name="Davis N.W."/>
            <person name="Lim A."/>
            <person name="Dimalanta E.T."/>
            <person name="Potamousis K."/>
            <person name="Apodaca J."/>
            <person name="Anantharaman T.S."/>
            <person name="Lin J."/>
            <person name="Yen G."/>
            <person name="Schwartz D.C."/>
            <person name="Welch R.A."/>
            <person name="Blattner F.R."/>
        </authorList>
    </citation>
    <scope>NUCLEOTIDE SEQUENCE [LARGE SCALE GENOMIC DNA]</scope>
    <source>
        <strain>O157:H7 / EDL933 / ATCC 700927 / EHEC</strain>
    </source>
</reference>
<reference key="2">
    <citation type="journal article" date="2001" name="DNA Res.">
        <title>Complete genome sequence of enterohemorrhagic Escherichia coli O157:H7 and genomic comparison with a laboratory strain K-12.</title>
        <authorList>
            <person name="Hayashi T."/>
            <person name="Makino K."/>
            <person name="Ohnishi M."/>
            <person name="Kurokawa K."/>
            <person name="Ishii K."/>
            <person name="Yokoyama K."/>
            <person name="Han C.-G."/>
            <person name="Ohtsubo E."/>
            <person name="Nakayama K."/>
            <person name="Murata T."/>
            <person name="Tanaka M."/>
            <person name="Tobe T."/>
            <person name="Iida T."/>
            <person name="Takami H."/>
            <person name="Honda T."/>
            <person name="Sasakawa C."/>
            <person name="Ogasawara N."/>
            <person name="Yasunaga T."/>
            <person name="Kuhara S."/>
            <person name="Shiba T."/>
            <person name="Hattori M."/>
            <person name="Shinagawa H."/>
        </authorList>
    </citation>
    <scope>NUCLEOTIDE SEQUENCE [LARGE SCALE GENOMIC DNA]</scope>
    <source>
        <strain>O157:H7 / Sakai / RIMD 0509952 / EHEC</strain>
    </source>
</reference>
<keyword id="KW-0378">Hydrolase</keyword>
<keyword id="KW-0448">Lipopolysaccharide biosynthesis</keyword>
<keyword id="KW-0460">Magnesium</keyword>
<keyword id="KW-0479">Metal-binding</keyword>
<keyword id="KW-1185">Reference proteome</keyword>
<accession>P0ABZ5</accession>
<accession>P45396</accession>
<accession>P45398</accession>
<feature type="chain" id="PRO_0000201697" description="3-deoxy-D-manno-octulosonate 8-phosphate phosphatase KdsC">
    <location>
        <begin position="1"/>
        <end position="188"/>
    </location>
</feature>
<feature type="binding site" evidence="2">
    <location>
        <position position="32"/>
    </location>
    <ligand>
        <name>Mg(2+)</name>
        <dbReference type="ChEBI" id="CHEBI:18420"/>
    </ligand>
</feature>
<feature type="binding site" evidence="2">
    <location>
        <position position="34"/>
    </location>
    <ligand>
        <name>Mg(2+)</name>
        <dbReference type="ChEBI" id="CHEBI:18420"/>
    </ligand>
</feature>
<feature type="binding site" evidence="2">
    <location>
        <position position="34"/>
    </location>
    <ligand>
        <name>substrate</name>
    </ligand>
</feature>
<feature type="binding site" evidence="2">
    <location>
        <begin position="55"/>
        <end position="59"/>
    </location>
    <ligand>
        <name>substrate</name>
    </ligand>
</feature>
<feature type="binding site" evidence="2">
    <location>
        <position position="63"/>
    </location>
    <ligand>
        <name>substrate</name>
    </ligand>
</feature>
<feature type="binding site" evidence="2">
    <location>
        <position position="78"/>
    </location>
    <ligand>
        <name>substrate</name>
    </ligand>
</feature>
<feature type="binding site" evidence="2">
    <location>
        <position position="86"/>
    </location>
    <ligand>
        <name>substrate</name>
    </ligand>
</feature>
<feature type="binding site" evidence="2">
    <location>
        <position position="102"/>
    </location>
    <ligand>
        <name>substrate</name>
    </ligand>
</feature>
<feature type="binding site" evidence="2">
    <location>
        <position position="125"/>
    </location>
    <ligand>
        <name>Mg(2+)</name>
        <dbReference type="ChEBI" id="CHEBI:18420"/>
    </ligand>
</feature>
<gene>
    <name type="primary">kdsC</name>
    <name type="ordered locus">Z4561</name>
    <name type="ordered locus">ECs4077</name>
</gene>
<protein>
    <recommendedName>
        <fullName>3-deoxy-D-manno-octulosonate 8-phosphate phosphatase KdsC</fullName>
        <ecNumber evidence="1">3.1.3.45</ecNumber>
    </recommendedName>
    <alternativeName>
        <fullName>KDO 8-P phosphatase</fullName>
    </alternativeName>
</protein>
<sequence length="188" mass="19997">MSKAGASLATCYGPVSADVIAKAENIRLLILDVDGVLSDGLIYMGNNGEELKAFNVRDGYGIRCALTSDIEVAIITGRKAKLVEDRCATLGITHLYQGQSNKLIAFSDLLEKLAIAPENVAYVGDDLIDWPVMEKVGLSVAVADAHPLLIPRADYVTRIAGGRGAVREVCDLLLLAQGKLDEAKGQSI</sequence>
<comment type="function">
    <text evidence="1">Catalyzes the hydrolysis of 3-deoxy-D-manno-octulosonate 8-phosphate (KDO 8-P) to 3-deoxy-D-manno-octulosonate (KDO) and inorganic phosphate.</text>
</comment>
<comment type="catalytic activity">
    <reaction evidence="1">
        <text>3-deoxy-alpha-D-manno-2-octulosonate-8-phosphate + H2O = 3-deoxy-alpha-D-manno-oct-2-ulosonate + phosphate</text>
        <dbReference type="Rhea" id="RHEA:11500"/>
        <dbReference type="ChEBI" id="CHEBI:15377"/>
        <dbReference type="ChEBI" id="CHEBI:43474"/>
        <dbReference type="ChEBI" id="CHEBI:85985"/>
        <dbReference type="ChEBI" id="CHEBI:85986"/>
        <dbReference type="EC" id="3.1.3.45"/>
    </reaction>
</comment>
<comment type="cofactor">
    <cofactor evidence="1">
        <name>Mg(2+)</name>
        <dbReference type="ChEBI" id="CHEBI:18420"/>
    </cofactor>
</comment>
<comment type="pathway">
    <text evidence="1">Carbohydrate biosynthesis; 3-deoxy-D-manno-octulosonate biosynthesis; 3-deoxy-D-manno-octulosonate from D-ribulose 5-phosphate: step 3/3.</text>
</comment>
<comment type="pathway">
    <text evidence="1">Bacterial outer membrane biogenesis; lipopolysaccharide biosynthesis.</text>
</comment>
<comment type="subunit">
    <text evidence="1">Homotetramer.</text>
</comment>
<comment type="similarity">
    <text evidence="3">Belongs to the KdsC family.</text>
</comment>
<proteinExistence type="inferred from homology"/>
<dbReference type="EC" id="3.1.3.45" evidence="1"/>
<dbReference type="EMBL" id="AE005174">
    <property type="protein sequence ID" value="AAG58332.1"/>
    <property type="molecule type" value="Genomic_DNA"/>
</dbReference>
<dbReference type="EMBL" id="BA000007">
    <property type="protein sequence ID" value="BAB37500.1"/>
    <property type="molecule type" value="Genomic_DNA"/>
</dbReference>
<dbReference type="PIR" id="E91138">
    <property type="entry name" value="E91138"/>
</dbReference>
<dbReference type="PIR" id="H85983">
    <property type="entry name" value="H85983"/>
</dbReference>
<dbReference type="RefSeq" id="NP_312104.1">
    <property type="nucleotide sequence ID" value="NC_002695.1"/>
</dbReference>
<dbReference type="RefSeq" id="WP_000030005.1">
    <property type="nucleotide sequence ID" value="NZ_VOAI01000014.1"/>
</dbReference>
<dbReference type="SMR" id="P0ABZ5"/>
<dbReference type="STRING" id="155864.Z4561"/>
<dbReference type="GeneID" id="916077"/>
<dbReference type="GeneID" id="93778783"/>
<dbReference type="KEGG" id="ece:Z4561"/>
<dbReference type="KEGG" id="ecs:ECs_4077"/>
<dbReference type="PATRIC" id="fig|386585.9.peg.4256"/>
<dbReference type="eggNOG" id="COG1778">
    <property type="taxonomic scope" value="Bacteria"/>
</dbReference>
<dbReference type="HOGENOM" id="CLU_106694_0_1_6"/>
<dbReference type="OMA" id="GMTLWQK"/>
<dbReference type="UniPathway" id="UPA00030"/>
<dbReference type="UniPathway" id="UPA00357">
    <property type="reaction ID" value="UER00475"/>
</dbReference>
<dbReference type="Proteomes" id="UP000000558">
    <property type="component" value="Chromosome"/>
</dbReference>
<dbReference type="Proteomes" id="UP000002519">
    <property type="component" value="Chromosome"/>
</dbReference>
<dbReference type="GO" id="GO:0019143">
    <property type="term" value="F:3-deoxy-manno-octulosonate-8-phosphatase activity"/>
    <property type="evidence" value="ECO:0007669"/>
    <property type="project" value="UniProtKB-EC"/>
</dbReference>
<dbReference type="GO" id="GO:0046872">
    <property type="term" value="F:metal ion binding"/>
    <property type="evidence" value="ECO:0007669"/>
    <property type="project" value="UniProtKB-KW"/>
</dbReference>
<dbReference type="GO" id="GO:0008781">
    <property type="term" value="F:N-acylneuraminate cytidylyltransferase activity"/>
    <property type="evidence" value="ECO:0007669"/>
    <property type="project" value="TreeGrafter"/>
</dbReference>
<dbReference type="GO" id="GO:0009103">
    <property type="term" value="P:lipopolysaccharide biosynthetic process"/>
    <property type="evidence" value="ECO:0007669"/>
    <property type="project" value="UniProtKB-UniPathway"/>
</dbReference>
<dbReference type="CDD" id="cd01630">
    <property type="entry name" value="HAD_KDO-like"/>
    <property type="match status" value="1"/>
</dbReference>
<dbReference type="FunFam" id="3.40.50.1000:FF:000029">
    <property type="entry name" value="3-deoxy-D-manno-octulosonate 8-phosphate phosphatase KdsC"/>
    <property type="match status" value="1"/>
</dbReference>
<dbReference type="Gene3D" id="3.40.50.1000">
    <property type="entry name" value="HAD superfamily/HAD-like"/>
    <property type="match status" value="1"/>
</dbReference>
<dbReference type="InterPro" id="IPR050793">
    <property type="entry name" value="CMP-NeuNAc_synthase"/>
</dbReference>
<dbReference type="InterPro" id="IPR036412">
    <property type="entry name" value="HAD-like_sf"/>
</dbReference>
<dbReference type="InterPro" id="IPR023214">
    <property type="entry name" value="HAD_sf"/>
</dbReference>
<dbReference type="InterPro" id="IPR010023">
    <property type="entry name" value="KdsC_fam"/>
</dbReference>
<dbReference type="NCBIfam" id="TIGR01670">
    <property type="entry name" value="KdsC-phosphatas"/>
    <property type="match status" value="1"/>
</dbReference>
<dbReference type="NCBIfam" id="NF007019">
    <property type="entry name" value="PRK09484.1"/>
    <property type="match status" value="1"/>
</dbReference>
<dbReference type="PANTHER" id="PTHR21485">
    <property type="entry name" value="HAD SUPERFAMILY MEMBERS CMAS AND KDSC"/>
    <property type="match status" value="1"/>
</dbReference>
<dbReference type="PANTHER" id="PTHR21485:SF6">
    <property type="entry name" value="N-ACYLNEURAMINATE CYTIDYLYLTRANSFERASE-RELATED"/>
    <property type="match status" value="1"/>
</dbReference>
<dbReference type="Pfam" id="PF08282">
    <property type="entry name" value="Hydrolase_3"/>
    <property type="match status" value="1"/>
</dbReference>
<dbReference type="PIRSF" id="PIRSF006118">
    <property type="entry name" value="KDO8-P_Ptase"/>
    <property type="match status" value="1"/>
</dbReference>
<dbReference type="SFLD" id="SFLDG01138">
    <property type="entry name" value="C1.6.2:_Deoxy-d-mannose-octulo"/>
    <property type="match status" value="1"/>
</dbReference>
<dbReference type="SFLD" id="SFLDS00003">
    <property type="entry name" value="Haloacid_Dehalogenase"/>
    <property type="match status" value="1"/>
</dbReference>
<dbReference type="SUPFAM" id="SSF56784">
    <property type="entry name" value="HAD-like"/>
    <property type="match status" value="1"/>
</dbReference>
<evidence type="ECO:0000250" key="1">
    <source>
        <dbReference type="UniProtKB" id="A0A140N5J7"/>
    </source>
</evidence>
<evidence type="ECO:0000250" key="2">
    <source>
        <dbReference type="UniProtKB" id="P67653"/>
    </source>
</evidence>
<evidence type="ECO:0000305" key="3"/>
<organism>
    <name type="scientific">Escherichia coli O157:H7</name>
    <dbReference type="NCBI Taxonomy" id="83334"/>
    <lineage>
        <taxon>Bacteria</taxon>
        <taxon>Pseudomonadati</taxon>
        <taxon>Pseudomonadota</taxon>
        <taxon>Gammaproteobacteria</taxon>
        <taxon>Enterobacterales</taxon>
        <taxon>Enterobacteriaceae</taxon>
        <taxon>Escherichia</taxon>
    </lineage>
</organism>